<comment type="function">
    <text evidence="1">Catalyzes the GTP-dependent ribosomal translocation step during translation elongation. During this step, the ribosome changes from the pre-translocational (PRE) to the post-translocational (POST) state as the newly formed A-site-bound peptidyl-tRNA and P-site-bound deacylated tRNA move to the P and E sites, respectively. Catalyzes the coordinated movement of the two tRNA molecules, the mRNA and conformational changes in the ribosome.</text>
</comment>
<comment type="subcellular location">
    <subcellularLocation>
        <location evidence="1">Cytoplasm</location>
    </subcellularLocation>
</comment>
<comment type="similarity">
    <text evidence="1">Belongs to the TRAFAC class translation factor GTPase superfamily. Classic translation factor GTPase family. EF-G/EF-2 subfamily.</text>
</comment>
<name>EFG_CLOTE</name>
<evidence type="ECO:0000255" key="1">
    <source>
        <dbReference type="HAMAP-Rule" id="MF_00054"/>
    </source>
</evidence>
<feature type="chain" id="PRO_0000091110" description="Elongation factor G">
    <location>
        <begin position="1"/>
        <end position="691"/>
    </location>
</feature>
<feature type="domain" description="tr-type G">
    <location>
        <begin position="10"/>
        <end position="284"/>
    </location>
</feature>
<feature type="binding site" evidence="1">
    <location>
        <begin position="19"/>
        <end position="26"/>
    </location>
    <ligand>
        <name>GTP</name>
        <dbReference type="ChEBI" id="CHEBI:37565"/>
    </ligand>
</feature>
<feature type="binding site" evidence="1">
    <location>
        <begin position="83"/>
        <end position="87"/>
    </location>
    <ligand>
        <name>GTP</name>
        <dbReference type="ChEBI" id="CHEBI:37565"/>
    </ligand>
</feature>
<feature type="binding site" evidence="1">
    <location>
        <begin position="137"/>
        <end position="140"/>
    </location>
    <ligand>
        <name>GTP</name>
        <dbReference type="ChEBI" id="CHEBI:37565"/>
    </ligand>
</feature>
<organism>
    <name type="scientific">Clostridium tetani (strain Massachusetts / E88)</name>
    <dbReference type="NCBI Taxonomy" id="212717"/>
    <lineage>
        <taxon>Bacteria</taxon>
        <taxon>Bacillati</taxon>
        <taxon>Bacillota</taxon>
        <taxon>Clostridia</taxon>
        <taxon>Eubacteriales</taxon>
        <taxon>Clostridiaceae</taxon>
        <taxon>Clostridium</taxon>
    </lineage>
</organism>
<dbReference type="EMBL" id="AE015927">
    <property type="protein sequence ID" value="AAO37058.1"/>
    <property type="molecule type" value="Genomic_DNA"/>
</dbReference>
<dbReference type="SMR" id="Q890N8"/>
<dbReference type="STRING" id="212717.CTC_02604"/>
<dbReference type="KEGG" id="ctc:CTC_02604"/>
<dbReference type="HOGENOM" id="CLU_002794_4_1_9"/>
<dbReference type="Proteomes" id="UP000001412">
    <property type="component" value="Chromosome"/>
</dbReference>
<dbReference type="GO" id="GO:0005737">
    <property type="term" value="C:cytoplasm"/>
    <property type="evidence" value="ECO:0007669"/>
    <property type="project" value="UniProtKB-SubCell"/>
</dbReference>
<dbReference type="GO" id="GO:0005525">
    <property type="term" value="F:GTP binding"/>
    <property type="evidence" value="ECO:0007669"/>
    <property type="project" value="UniProtKB-UniRule"/>
</dbReference>
<dbReference type="GO" id="GO:0003924">
    <property type="term" value="F:GTPase activity"/>
    <property type="evidence" value="ECO:0007669"/>
    <property type="project" value="InterPro"/>
</dbReference>
<dbReference type="GO" id="GO:0003746">
    <property type="term" value="F:translation elongation factor activity"/>
    <property type="evidence" value="ECO:0007669"/>
    <property type="project" value="UniProtKB-UniRule"/>
</dbReference>
<dbReference type="GO" id="GO:0032790">
    <property type="term" value="P:ribosome disassembly"/>
    <property type="evidence" value="ECO:0007669"/>
    <property type="project" value="TreeGrafter"/>
</dbReference>
<dbReference type="CDD" id="cd01886">
    <property type="entry name" value="EF-G"/>
    <property type="match status" value="1"/>
</dbReference>
<dbReference type="CDD" id="cd16262">
    <property type="entry name" value="EFG_III"/>
    <property type="match status" value="1"/>
</dbReference>
<dbReference type="CDD" id="cd01434">
    <property type="entry name" value="EFG_mtEFG1_IV"/>
    <property type="match status" value="1"/>
</dbReference>
<dbReference type="CDD" id="cd03713">
    <property type="entry name" value="EFG_mtEFG_C"/>
    <property type="match status" value="1"/>
</dbReference>
<dbReference type="CDD" id="cd04088">
    <property type="entry name" value="EFG_mtEFG_II"/>
    <property type="match status" value="1"/>
</dbReference>
<dbReference type="FunFam" id="2.40.30.10:FF:000006">
    <property type="entry name" value="Elongation factor G"/>
    <property type="match status" value="1"/>
</dbReference>
<dbReference type="FunFam" id="3.30.230.10:FF:000003">
    <property type="entry name" value="Elongation factor G"/>
    <property type="match status" value="1"/>
</dbReference>
<dbReference type="FunFam" id="3.30.70.240:FF:000001">
    <property type="entry name" value="Elongation factor G"/>
    <property type="match status" value="1"/>
</dbReference>
<dbReference type="FunFam" id="3.30.70.870:FF:000001">
    <property type="entry name" value="Elongation factor G"/>
    <property type="match status" value="1"/>
</dbReference>
<dbReference type="FunFam" id="3.40.50.300:FF:000029">
    <property type="entry name" value="Elongation factor G"/>
    <property type="match status" value="1"/>
</dbReference>
<dbReference type="Gene3D" id="3.30.230.10">
    <property type="match status" value="1"/>
</dbReference>
<dbReference type="Gene3D" id="3.30.70.240">
    <property type="match status" value="1"/>
</dbReference>
<dbReference type="Gene3D" id="3.30.70.870">
    <property type="entry name" value="Elongation Factor G (Translational Gtpase), domain 3"/>
    <property type="match status" value="1"/>
</dbReference>
<dbReference type="Gene3D" id="3.40.50.300">
    <property type="entry name" value="P-loop containing nucleotide triphosphate hydrolases"/>
    <property type="match status" value="1"/>
</dbReference>
<dbReference type="Gene3D" id="2.40.30.10">
    <property type="entry name" value="Translation factors"/>
    <property type="match status" value="1"/>
</dbReference>
<dbReference type="HAMAP" id="MF_00054_B">
    <property type="entry name" value="EF_G_EF_2_B"/>
    <property type="match status" value="1"/>
</dbReference>
<dbReference type="InterPro" id="IPR041095">
    <property type="entry name" value="EFG_II"/>
</dbReference>
<dbReference type="InterPro" id="IPR009022">
    <property type="entry name" value="EFG_III"/>
</dbReference>
<dbReference type="InterPro" id="IPR035647">
    <property type="entry name" value="EFG_III/V"/>
</dbReference>
<dbReference type="InterPro" id="IPR047872">
    <property type="entry name" value="EFG_IV"/>
</dbReference>
<dbReference type="InterPro" id="IPR035649">
    <property type="entry name" value="EFG_V"/>
</dbReference>
<dbReference type="InterPro" id="IPR000640">
    <property type="entry name" value="EFG_V-like"/>
</dbReference>
<dbReference type="InterPro" id="IPR004161">
    <property type="entry name" value="EFTu-like_2"/>
</dbReference>
<dbReference type="InterPro" id="IPR031157">
    <property type="entry name" value="G_TR_CS"/>
</dbReference>
<dbReference type="InterPro" id="IPR027417">
    <property type="entry name" value="P-loop_NTPase"/>
</dbReference>
<dbReference type="InterPro" id="IPR020568">
    <property type="entry name" value="Ribosomal_Su5_D2-typ_SF"/>
</dbReference>
<dbReference type="InterPro" id="IPR014721">
    <property type="entry name" value="Ribsml_uS5_D2-typ_fold_subgr"/>
</dbReference>
<dbReference type="InterPro" id="IPR005225">
    <property type="entry name" value="Small_GTP-bd"/>
</dbReference>
<dbReference type="InterPro" id="IPR000795">
    <property type="entry name" value="T_Tr_GTP-bd_dom"/>
</dbReference>
<dbReference type="InterPro" id="IPR009000">
    <property type="entry name" value="Transl_B-barrel_sf"/>
</dbReference>
<dbReference type="InterPro" id="IPR004540">
    <property type="entry name" value="Transl_elong_EFG/EF2"/>
</dbReference>
<dbReference type="InterPro" id="IPR005517">
    <property type="entry name" value="Transl_elong_EFG/EF2_IV"/>
</dbReference>
<dbReference type="NCBIfam" id="TIGR00484">
    <property type="entry name" value="EF-G"/>
    <property type="match status" value="1"/>
</dbReference>
<dbReference type="NCBIfam" id="NF009381">
    <property type="entry name" value="PRK12740.1-5"/>
    <property type="match status" value="1"/>
</dbReference>
<dbReference type="NCBIfam" id="TIGR00231">
    <property type="entry name" value="small_GTP"/>
    <property type="match status" value="1"/>
</dbReference>
<dbReference type="PANTHER" id="PTHR43261:SF1">
    <property type="entry name" value="RIBOSOME-RELEASING FACTOR 2, MITOCHONDRIAL"/>
    <property type="match status" value="1"/>
</dbReference>
<dbReference type="PANTHER" id="PTHR43261">
    <property type="entry name" value="TRANSLATION ELONGATION FACTOR G-RELATED"/>
    <property type="match status" value="1"/>
</dbReference>
<dbReference type="Pfam" id="PF00679">
    <property type="entry name" value="EFG_C"/>
    <property type="match status" value="1"/>
</dbReference>
<dbReference type="Pfam" id="PF14492">
    <property type="entry name" value="EFG_III"/>
    <property type="match status" value="1"/>
</dbReference>
<dbReference type="Pfam" id="PF03764">
    <property type="entry name" value="EFG_IV"/>
    <property type="match status" value="1"/>
</dbReference>
<dbReference type="Pfam" id="PF00009">
    <property type="entry name" value="GTP_EFTU"/>
    <property type="match status" value="1"/>
</dbReference>
<dbReference type="Pfam" id="PF03144">
    <property type="entry name" value="GTP_EFTU_D2"/>
    <property type="match status" value="1"/>
</dbReference>
<dbReference type="PRINTS" id="PR00315">
    <property type="entry name" value="ELONGATNFCT"/>
</dbReference>
<dbReference type="SMART" id="SM00838">
    <property type="entry name" value="EFG_C"/>
    <property type="match status" value="1"/>
</dbReference>
<dbReference type="SMART" id="SM00889">
    <property type="entry name" value="EFG_IV"/>
    <property type="match status" value="1"/>
</dbReference>
<dbReference type="SUPFAM" id="SSF54980">
    <property type="entry name" value="EF-G C-terminal domain-like"/>
    <property type="match status" value="2"/>
</dbReference>
<dbReference type="SUPFAM" id="SSF52540">
    <property type="entry name" value="P-loop containing nucleoside triphosphate hydrolases"/>
    <property type="match status" value="1"/>
</dbReference>
<dbReference type="SUPFAM" id="SSF54211">
    <property type="entry name" value="Ribosomal protein S5 domain 2-like"/>
    <property type="match status" value="1"/>
</dbReference>
<dbReference type="SUPFAM" id="SSF50447">
    <property type="entry name" value="Translation proteins"/>
    <property type="match status" value="1"/>
</dbReference>
<dbReference type="PROSITE" id="PS00301">
    <property type="entry name" value="G_TR_1"/>
    <property type="match status" value="1"/>
</dbReference>
<dbReference type="PROSITE" id="PS51722">
    <property type="entry name" value="G_TR_2"/>
    <property type="match status" value="1"/>
</dbReference>
<gene>
    <name evidence="1" type="primary">fusA</name>
    <name type="ordered locus">CTC_02604</name>
</gene>
<reference key="1">
    <citation type="journal article" date="2003" name="Proc. Natl. Acad. Sci. U.S.A.">
        <title>The genome sequence of Clostridium tetani, the causative agent of tetanus disease.</title>
        <authorList>
            <person name="Brueggemann H."/>
            <person name="Baeumer S."/>
            <person name="Fricke W.F."/>
            <person name="Wiezer A."/>
            <person name="Liesegang H."/>
            <person name="Decker I."/>
            <person name="Herzberg C."/>
            <person name="Martinez-Arias R."/>
            <person name="Merkl R."/>
            <person name="Henne A."/>
            <person name="Gottschalk G."/>
        </authorList>
    </citation>
    <scope>NUCLEOTIDE SEQUENCE [LARGE SCALE GENOMIC DNA]</scope>
    <source>
        <strain>Massachusetts / E88</strain>
    </source>
</reference>
<sequence>MSVKREYPLKMYRNIGIMAHIDAGKTTTTERILFYTGKTHKIGETHDGAATMDWMVQEQERGITITSAATTCIWKDHVINVIDTPGHVDFTVEVERSLRVLDGAVTVLTAKGGVEPQTETVWRQADKYKVPRMAYVNKMDIMGADFFRVVNMMRERLHANAVPIQIPIGAEDTFKGYVDLIRNEAIIYEDDLGTVMDTEEIPEDMKDIAEEYRGAMIEAIVELDEELMMKYLEGEEISVEELDLALRKGVLANKIVPVMCGSSYKNKGVQPMIDAIVKYLPSPLDIPPVKGTHPETGEEVERKASDDEPMSTLAFKIATDPFIGKLAFVRVYSGVMKNGTYVLNPVKGKRERIGRLVKMHANHREEVEELHAGDLGAVVGLKDTITGDTLCDEKEPVILEKMEFPEPVISIAIEPKTKAGQEKMGLSLAKLAEEDPTFRTFTNQETGQTIIEGMGELHLEVIVDRLQREFKVECNVGKPQVAYKETIKKAVKAEGKFVRQSGGRGQYGHCWIEMTPHEGEYEFQNAIVGGAIPKEYIPAIDHGIEEASDSGVIAGYPVINFKVKLYDGSYHDVDSSEMAFKIAGSMAFKNAMSKADPVLLEPVMKVEVVVPEEYMGDVMGDINSRRGRIDGMEATAGAQNIRAFVPLSQMFGYATVLRSRTQGRGNYSMEFDHYEEVPKSIQEEIIGERMK</sequence>
<protein>
    <recommendedName>
        <fullName evidence="1">Elongation factor G</fullName>
        <shortName evidence="1">EF-G</shortName>
    </recommendedName>
</protein>
<proteinExistence type="inferred from homology"/>
<keyword id="KW-0963">Cytoplasm</keyword>
<keyword id="KW-0251">Elongation factor</keyword>
<keyword id="KW-0342">GTP-binding</keyword>
<keyword id="KW-0547">Nucleotide-binding</keyword>
<keyword id="KW-0648">Protein biosynthesis</keyword>
<keyword id="KW-1185">Reference proteome</keyword>
<accession>Q890N8</accession>